<organism>
    <name type="scientific">Bacillus cereus (strain ATCC 14579 / DSM 31 / CCUG 7414 / JCM 2152 / NBRC 15305 / NCIMB 9373 / NCTC 2599 / NRRL B-3711)</name>
    <dbReference type="NCBI Taxonomy" id="226900"/>
    <lineage>
        <taxon>Bacteria</taxon>
        <taxon>Bacillati</taxon>
        <taxon>Bacillota</taxon>
        <taxon>Bacilli</taxon>
        <taxon>Bacillales</taxon>
        <taxon>Bacillaceae</taxon>
        <taxon>Bacillus</taxon>
        <taxon>Bacillus cereus group</taxon>
    </lineage>
</organism>
<gene>
    <name type="primary">arcB</name>
    <name type="ordered locus">BC_0407</name>
</gene>
<keyword id="KW-0056">Arginine metabolism</keyword>
<keyword id="KW-0963">Cytoplasm</keyword>
<keyword id="KW-1185">Reference proteome</keyword>
<keyword id="KW-0808">Transferase</keyword>
<name>OTCC_BACCR</name>
<reference key="1">
    <citation type="journal article" date="2003" name="Nature">
        <title>Genome sequence of Bacillus cereus and comparative analysis with Bacillus anthracis.</title>
        <authorList>
            <person name="Ivanova N."/>
            <person name="Sorokin A."/>
            <person name="Anderson I."/>
            <person name="Galleron N."/>
            <person name="Candelon B."/>
            <person name="Kapatral V."/>
            <person name="Bhattacharyya A."/>
            <person name="Reznik G."/>
            <person name="Mikhailova N."/>
            <person name="Lapidus A."/>
            <person name="Chu L."/>
            <person name="Mazur M."/>
            <person name="Goltsman E."/>
            <person name="Larsen N."/>
            <person name="D'Souza M."/>
            <person name="Walunas T."/>
            <person name="Grechkin Y."/>
            <person name="Pusch G."/>
            <person name="Haselkorn R."/>
            <person name="Fonstein M."/>
            <person name="Ehrlich S.D."/>
            <person name="Overbeek R."/>
            <person name="Kyrpides N.C."/>
        </authorList>
    </citation>
    <scope>NUCLEOTIDE SEQUENCE [LARGE SCALE GENOMIC DNA]</scope>
    <source>
        <strain>ATCC 14579 / DSM 31 / CCUG 7414 / JCM 2152 / NBRC 15305 / NCIMB 9373 / NCTC 2599 / NRRL B-3711</strain>
    </source>
</reference>
<sequence>MLMTRPNLKGRSFLAEKDFTQEELLYFLDLAAELKEKKKNGIPHHYLEGKNVALLFEKTSTRTRCAFTVACTDLGANPEYLGKGDIQLGKKESVEDTAKVLGRMFDGIEFRGFNHETVESLAQNSGVPVWNGLTDMWHPTQTLADLLTIREHIGKLKNVKLVYVGDGRNNVANSLLVGGAIVGMDVRICTPESLWPAQEVIDLAKKYNEQVMITSNVEEAVANADVIYTDVWVSMGEEEKFAERVELLKPYQVNMKMIKATGNENVIFLHCLPAFHDVETMYGEEVYEKYGLKEMEVTDEVFRSKHSKVFDQAENRMHTIKAVMAATLGNME</sequence>
<dbReference type="EC" id="2.1.3.3"/>
<dbReference type="EMBL" id="AE016877">
    <property type="protein sequence ID" value="AAP07447.1"/>
    <property type="molecule type" value="Genomic_DNA"/>
</dbReference>
<dbReference type="RefSeq" id="NP_830246.1">
    <property type="nucleotide sequence ID" value="NC_004722.1"/>
</dbReference>
<dbReference type="SMR" id="Q81II0"/>
<dbReference type="STRING" id="226900.BC_0407"/>
<dbReference type="KEGG" id="bce:BC0407"/>
<dbReference type="PATRIC" id="fig|226900.8.peg.377"/>
<dbReference type="HOGENOM" id="CLU_043846_3_1_9"/>
<dbReference type="OrthoDB" id="9802587at2"/>
<dbReference type="UniPathway" id="UPA00254">
    <property type="reaction ID" value="UER00365"/>
</dbReference>
<dbReference type="Proteomes" id="UP000001417">
    <property type="component" value="Chromosome"/>
</dbReference>
<dbReference type="GO" id="GO:0005737">
    <property type="term" value="C:cytoplasm"/>
    <property type="evidence" value="ECO:0007669"/>
    <property type="project" value="UniProtKB-SubCell"/>
</dbReference>
<dbReference type="GO" id="GO:0016597">
    <property type="term" value="F:amino acid binding"/>
    <property type="evidence" value="ECO:0007669"/>
    <property type="project" value="InterPro"/>
</dbReference>
<dbReference type="GO" id="GO:0004585">
    <property type="term" value="F:ornithine carbamoyltransferase activity"/>
    <property type="evidence" value="ECO:0000318"/>
    <property type="project" value="GO_Central"/>
</dbReference>
<dbReference type="GO" id="GO:0042450">
    <property type="term" value="P:arginine biosynthetic process via ornithine"/>
    <property type="evidence" value="ECO:0000318"/>
    <property type="project" value="GO_Central"/>
</dbReference>
<dbReference type="GO" id="GO:0019547">
    <property type="term" value="P:arginine catabolic process to ornithine"/>
    <property type="evidence" value="ECO:0007669"/>
    <property type="project" value="UniProtKB-UniPathway"/>
</dbReference>
<dbReference type="GO" id="GO:0019240">
    <property type="term" value="P:citrulline biosynthetic process"/>
    <property type="evidence" value="ECO:0000318"/>
    <property type="project" value="GO_Central"/>
</dbReference>
<dbReference type="GO" id="GO:0006526">
    <property type="term" value="P:L-arginine biosynthetic process"/>
    <property type="evidence" value="ECO:0007669"/>
    <property type="project" value="UniProtKB-UniRule"/>
</dbReference>
<dbReference type="FunFam" id="3.40.50.1370:FF:000004">
    <property type="entry name" value="Ornithine carbamoyltransferase"/>
    <property type="match status" value="1"/>
</dbReference>
<dbReference type="Gene3D" id="3.40.50.1370">
    <property type="entry name" value="Aspartate/ornithine carbamoyltransferase"/>
    <property type="match status" value="2"/>
</dbReference>
<dbReference type="HAMAP" id="MF_01109">
    <property type="entry name" value="OTCase"/>
    <property type="match status" value="1"/>
</dbReference>
<dbReference type="InterPro" id="IPR006132">
    <property type="entry name" value="Asp/Orn_carbamoyltranf_P-bd"/>
</dbReference>
<dbReference type="InterPro" id="IPR006130">
    <property type="entry name" value="Asp/Orn_carbamoylTrfase"/>
</dbReference>
<dbReference type="InterPro" id="IPR036901">
    <property type="entry name" value="Asp/Orn_carbamoylTrfase_sf"/>
</dbReference>
<dbReference type="InterPro" id="IPR006131">
    <property type="entry name" value="Asp_carbamoyltransf_Asp/Orn-bd"/>
</dbReference>
<dbReference type="InterPro" id="IPR002292">
    <property type="entry name" value="Orn/put_carbamltrans"/>
</dbReference>
<dbReference type="InterPro" id="IPR024904">
    <property type="entry name" value="OTCase_ArgI"/>
</dbReference>
<dbReference type="NCBIfam" id="TIGR00658">
    <property type="entry name" value="orni_carb_tr"/>
    <property type="match status" value="1"/>
</dbReference>
<dbReference type="NCBIfam" id="NF001986">
    <property type="entry name" value="PRK00779.1"/>
    <property type="match status" value="1"/>
</dbReference>
<dbReference type="PANTHER" id="PTHR45753:SF1">
    <property type="entry name" value="ORNITHINE CARBAMOYLTRANSFERASE, CATABOLIC"/>
    <property type="match status" value="1"/>
</dbReference>
<dbReference type="PANTHER" id="PTHR45753">
    <property type="entry name" value="ORNITHINE CARBAMOYLTRANSFERASE, MITOCHONDRIAL"/>
    <property type="match status" value="1"/>
</dbReference>
<dbReference type="Pfam" id="PF00185">
    <property type="entry name" value="OTCace"/>
    <property type="match status" value="1"/>
</dbReference>
<dbReference type="Pfam" id="PF02729">
    <property type="entry name" value="OTCace_N"/>
    <property type="match status" value="1"/>
</dbReference>
<dbReference type="PRINTS" id="PR00100">
    <property type="entry name" value="AOTCASE"/>
</dbReference>
<dbReference type="PRINTS" id="PR00102">
    <property type="entry name" value="OTCASE"/>
</dbReference>
<dbReference type="SUPFAM" id="SSF53671">
    <property type="entry name" value="Aspartate/ornithine carbamoyltransferase"/>
    <property type="match status" value="1"/>
</dbReference>
<dbReference type="PROSITE" id="PS00097">
    <property type="entry name" value="CARBAMOYLTRANSFERASE"/>
    <property type="match status" value="1"/>
</dbReference>
<feature type="chain" id="PRO_0000112879" description="Ornithine carbamoyltransferase, catabolic">
    <location>
        <begin position="1"/>
        <end position="332"/>
    </location>
</feature>
<feature type="binding site" evidence="2">
    <location>
        <begin position="60"/>
        <end position="63"/>
    </location>
    <ligand>
        <name>carbamoyl phosphate</name>
        <dbReference type="ChEBI" id="CHEBI:58228"/>
    </ligand>
</feature>
<feature type="binding site" evidence="2">
    <location>
        <position position="87"/>
    </location>
    <ligand>
        <name>carbamoyl phosphate</name>
        <dbReference type="ChEBI" id="CHEBI:58228"/>
    </ligand>
</feature>
<feature type="binding site" evidence="2">
    <location>
        <position position="111"/>
    </location>
    <ligand>
        <name>carbamoyl phosphate</name>
        <dbReference type="ChEBI" id="CHEBI:58228"/>
    </ligand>
</feature>
<feature type="binding site" evidence="2">
    <location>
        <begin position="138"/>
        <end position="141"/>
    </location>
    <ligand>
        <name>carbamoyl phosphate</name>
        <dbReference type="ChEBI" id="CHEBI:58228"/>
    </ligand>
</feature>
<feature type="binding site" evidence="2">
    <location>
        <position position="170"/>
    </location>
    <ligand>
        <name>L-ornithine</name>
        <dbReference type="ChEBI" id="CHEBI:46911"/>
    </ligand>
</feature>
<feature type="binding site" evidence="2">
    <location>
        <position position="230"/>
    </location>
    <ligand>
        <name>L-ornithine</name>
        <dbReference type="ChEBI" id="CHEBI:46911"/>
    </ligand>
</feature>
<feature type="binding site" evidence="2">
    <location>
        <begin position="234"/>
        <end position="235"/>
    </location>
    <ligand>
        <name>L-ornithine</name>
        <dbReference type="ChEBI" id="CHEBI:46911"/>
    </ligand>
</feature>
<feature type="binding site" evidence="2">
    <location>
        <begin position="271"/>
        <end position="272"/>
    </location>
    <ligand>
        <name>carbamoyl phosphate</name>
        <dbReference type="ChEBI" id="CHEBI:58228"/>
    </ligand>
</feature>
<feature type="binding site" evidence="2">
    <location>
        <position position="316"/>
    </location>
    <ligand>
        <name>carbamoyl phosphate</name>
        <dbReference type="ChEBI" id="CHEBI:58228"/>
    </ligand>
</feature>
<proteinExistence type="inferred from homology"/>
<comment type="function">
    <text evidence="1">Reversibly catalyzes the transfer of the carbamoyl group from carbamoyl phosphate (CP) to the N(epsilon) atom of ornithine (ORN) to produce L-citrulline.</text>
</comment>
<comment type="catalytic activity">
    <reaction>
        <text>carbamoyl phosphate + L-ornithine = L-citrulline + phosphate + H(+)</text>
        <dbReference type="Rhea" id="RHEA:19513"/>
        <dbReference type="ChEBI" id="CHEBI:15378"/>
        <dbReference type="ChEBI" id="CHEBI:43474"/>
        <dbReference type="ChEBI" id="CHEBI:46911"/>
        <dbReference type="ChEBI" id="CHEBI:57743"/>
        <dbReference type="ChEBI" id="CHEBI:58228"/>
        <dbReference type="EC" id="2.1.3.3"/>
    </reaction>
</comment>
<comment type="pathway">
    <text>Amino-acid degradation; L-arginine degradation via ADI pathway; carbamoyl phosphate from L-arginine: step 2/2.</text>
</comment>
<comment type="subcellular location">
    <subcellularLocation>
        <location evidence="1">Cytoplasm</location>
    </subcellularLocation>
</comment>
<comment type="similarity">
    <text evidence="3">Belongs to the aspartate/ornithine carbamoyltransferase superfamily. OTCase family.</text>
</comment>
<evidence type="ECO:0000250" key="1"/>
<evidence type="ECO:0000255" key="2">
    <source>
        <dbReference type="HAMAP-Rule" id="MF_01109"/>
    </source>
</evidence>
<evidence type="ECO:0000305" key="3"/>
<accession>Q81II0</accession>
<protein>
    <recommendedName>
        <fullName>Ornithine carbamoyltransferase, catabolic</fullName>
        <shortName>OTCase</shortName>
        <ecNumber>2.1.3.3</ecNumber>
    </recommendedName>
</protein>